<accession>A9A9J5</accession>
<feature type="chain" id="PRO_1000188461" description="L-cysteine desulfidase">
    <location>
        <begin position="1"/>
        <end position="396"/>
    </location>
</feature>
<feature type="active site" description="Proton acceptor" evidence="1">
    <location>
        <position position="23"/>
    </location>
</feature>
<feature type="binding site" evidence="1">
    <location>
        <position position="288"/>
    </location>
    <ligand>
        <name>[4Fe-4S] cluster</name>
        <dbReference type="ChEBI" id="CHEBI:49883"/>
    </ligand>
</feature>
<feature type="binding site" evidence="1">
    <location>
        <position position="330"/>
    </location>
    <ligand>
        <name>[4Fe-4S] cluster</name>
        <dbReference type="ChEBI" id="CHEBI:49883"/>
    </ligand>
</feature>
<feature type="binding site" evidence="1">
    <location>
        <position position="337"/>
    </location>
    <ligand>
        <name>[4Fe-4S] cluster</name>
        <dbReference type="ChEBI" id="CHEBI:49883"/>
    </ligand>
</feature>
<keyword id="KW-0004">4Fe-4S</keyword>
<keyword id="KW-0408">Iron</keyword>
<keyword id="KW-0411">Iron-sulfur</keyword>
<keyword id="KW-0456">Lyase</keyword>
<keyword id="KW-0479">Metal-binding</keyword>
<comment type="function">
    <text evidence="1">Catalyzes the cleavage of L-cysteine to form 2-aminoprop-2-enoate and sulfide. The former then spontaneously hydrolyzes to pyruvate and NH(3). May be responsible for the production of sulfide required for the biosynthesis of iron-sulfur centers in this archaea.</text>
</comment>
<comment type="catalytic activity">
    <reaction evidence="1">
        <text>L-cysteine + H2O = hydrogen sulfide + pyruvate + NH4(+) + H(+)</text>
        <dbReference type="Rhea" id="RHEA:24931"/>
        <dbReference type="ChEBI" id="CHEBI:15361"/>
        <dbReference type="ChEBI" id="CHEBI:15377"/>
        <dbReference type="ChEBI" id="CHEBI:15378"/>
        <dbReference type="ChEBI" id="CHEBI:28938"/>
        <dbReference type="ChEBI" id="CHEBI:29919"/>
        <dbReference type="ChEBI" id="CHEBI:35235"/>
        <dbReference type="EC" id="4.4.1.28"/>
    </reaction>
</comment>
<comment type="cofactor">
    <cofactor evidence="1">
        <name>[4Fe-4S] cluster</name>
        <dbReference type="ChEBI" id="CHEBI:49883"/>
    </cofactor>
    <text evidence="1">Binds 1 [4Fe-4S] cluster per subunit.</text>
</comment>
<comment type="subunit">
    <text evidence="1">Homotrimer.</text>
</comment>
<comment type="similarity">
    <text evidence="2">Belongs to the L-cysteine desulfidase family.</text>
</comment>
<sequence length="396" mass="43171">MDDSKHILITKILKNEVTEALGCTEVGLIGYAVSLCNISDPFSIDKLELTLNNGSFKNAYAVGVPNTGKYGILPAVVGGLLGNSKNKLLIFNDITYSQELEDFIKEKLEIKVIDGPLFCNIKIKDNSGNYFESLIKDNHLNVVIPKIEKEKIDVEITTSEKGEYKNLELIDFLDYLDEIPEKIGKLVEKTVQTNKNLIKGDFLNYGTDILSIIVNKTTSACNTRMTGENMPAMSVAKSGNMGIMATLPIISYDSSTENNSEKLIKSVLLSMLVTIYSTYNSSYLSSMCGCVSKGGMGAVIGLCYYKNGKNLKKLDSSARTFTANLPGIICDGGKVGCALKLASGCFAAYSSLFVDISYENGIVGKDFKECVENISKISKAMGDLDCDIVEIMSKKM</sequence>
<organism>
    <name type="scientific">Methanococcus maripaludis (strain C6 / ATCC BAA-1332)</name>
    <dbReference type="NCBI Taxonomy" id="444158"/>
    <lineage>
        <taxon>Archaea</taxon>
        <taxon>Methanobacteriati</taxon>
        <taxon>Methanobacteriota</taxon>
        <taxon>Methanomada group</taxon>
        <taxon>Methanococci</taxon>
        <taxon>Methanococcales</taxon>
        <taxon>Methanococcaceae</taxon>
        <taxon>Methanococcus</taxon>
    </lineage>
</organism>
<reference key="1">
    <citation type="submission" date="2007-10" db="EMBL/GenBank/DDBJ databases">
        <title>Complete sequence of Methanococcus maripaludis C6.</title>
        <authorList>
            <consortium name="US DOE Joint Genome Institute"/>
            <person name="Copeland A."/>
            <person name="Lucas S."/>
            <person name="Lapidus A."/>
            <person name="Barry K."/>
            <person name="Glavina del Rio T."/>
            <person name="Dalin E."/>
            <person name="Tice H."/>
            <person name="Pitluck S."/>
            <person name="Clum A."/>
            <person name="Schmutz J."/>
            <person name="Larimer F."/>
            <person name="Land M."/>
            <person name="Hauser L."/>
            <person name="Kyrpides N."/>
            <person name="Mikhailova N."/>
            <person name="Sieprawska-Lupa M."/>
            <person name="Whitman W.B."/>
            <person name="Richardson P."/>
        </authorList>
    </citation>
    <scope>NUCLEOTIDE SEQUENCE [LARGE SCALE GENOMIC DNA]</scope>
    <source>
        <strain>C6 / ATCC BAA-1332</strain>
    </source>
</reference>
<gene>
    <name type="ordered locus">MmarC6_1205</name>
</gene>
<proteinExistence type="inferred from homology"/>
<dbReference type="EC" id="4.4.1.28" evidence="1"/>
<dbReference type="EMBL" id="CP000867">
    <property type="protein sequence ID" value="ABX02018.1"/>
    <property type="molecule type" value="Genomic_DNA"/>
</dbReference>
<dbReference type="STRING" id="444158.MmarC6_1205"/>
<dbReference type="KEGG" id="mmx:MmarC6_1205"/>
<dbReference type="eggNOG" id="arCOG05065">
    <property type="taxonomic scope" value="Archaea"/>
</dbReference>
<dbReference type="HOGENOM" id="CLU_051840_0_0_2"/>
<dbReference type="OrthoDB" id="60297at2157"/>
<dbReference type="PhylomeDB" id="A9A9J5"/>
<dbReference type="GO" id="GO:0051539">
    <property type="term" value="F:4 iron, 4 sulfur cluster binding"/>
    <property type="evidence" value="ECO:0007669"/>
    <property type="project" value="UniProtKB-KW"/>
</dbReference>
<dbReference type="GO" id="GO:0080146">
    <property type="term" value="F:L-cysteine desulfhydrase activity"/>
    <property type="evidence" value="ECO:0007669"/>
    <property type="project" value="TreeGrafter"/>
</dbReference>
<dbReference type="GO" id="GO:0046872">
    <property type="term" value="F:metal ion binding"/>
    <property type="evidence" value="ECO:0007669"/>
    <property type="project" value="UniProtKB-KW"/>
</dbReference>
<dbReference type="GO" id="GO:0019450">
    <property type="term" value="P:L-cysteine catabolic process to pyruvate"/>
    <property type="evidence" value="ECO:0007669"/>
    <property type="project" value="TreeGrafter"/>
</dbReference>
<dbReference type="InterPro" id="IPR005130">
    <property type="entry name" value="Ser_deHydtase-like_asu"/>
</dbReference>
<dbReference type="InterPro" id="IPR021144">
    <property type="entry name" value="UPF0597"/>
</dbReference>
<dbReference type="PANTHER" id="PTHR30501">
    <property type="entry name" value="UPF0597 PROTEIN YHAM"/>
    <property type="match status" value="1"/>
</dbReference>
<dbReference type="PANTHER" id="PTHR30501:SF2">
    <property type="entry name" value="UPF0597 PROTEIN YHAM"/>
    <property type="match status" value="1"/>
</dbReference>
<dbReference type="Pfam" id="PF03313">
    <property type="entry name" value="SDH_alpha"/>
    <property type="match status" value="1"/>
</dbReference>
<dbReference type="PIRSF" id="PIRSF006054">
    <property type="entry name" value="UCP006054"/>
    <property type="match status" value="1"/>
</dbReference>
<protein>
    <recommendedName>
        <fullName evidence="1">L-cysteine desulfidase</fullName>
        <ecNumber evidence="1">4.4.1.28</ecNumber>
    </recommendedName>
    <alternativeName>
        <fullName>L-cysteine desulfhydrase</fullName>
    </alternativeName>
</protein>
<evidence type="ECO:0000250" key="1">
    <source>
        <dbReference type="UniProtKB" id="Q58431"/>
    </source>
</evidence>
<evidence type="ECO:0000305" key="2"/>
<name>CYDE_METM6</name>